<reference key="1">
    <citation type="journal article" date="2001" name="Nature">
        <title>Genome sequence of enterohaemorrhagic Escherichia coli O157:H7.</title>
        <authorList>
            <person name="Perna N.T."/>
            <person name="Plunkett G. III"/>
            <person name="Burland V."/>
            <person name="Mau B."/>
            <person name="Glasner J.D."/>
            <person name="Rose D.J."/>
            <person name="Mayhew G.F."/>
            <person name="Evans P.S."/>
            <person name="Gregor J."/>
            <person name="Kirkpatrick H.A."/>
            <person name="Posfai G."/>
            <person name="Hackett J."/>
            <person name="Klink S."/>
            <person name="Boutin A."/>
            <person name="Shao Y."/>
            <person name="Miller L."/>
            <person name="Grotbeck E.J."/>
            <person name="Davis N.W."/>
            <person name="Lim A."/>
            <person name="Dimalanta E.T."/>
            <person name="Potamousis K."/>
            <person name="Apodaca J."/>
            <person name="Anantharaman T.S."/>
            <person name="Lin J."/>
            <person name="Yen G."/>
            <person name="Schwartz D.C."/>
            <person name="Welch R.A."/>
            <person name="Blattner F.R."/>
        </authorList>
    </citation>
    <scope>NUCLEOTIDE SEQUENCE [LARGE SCALE GENOMIC DNA]</scope>
    <source>
        <strain>O157:H7 / EDL933 / ATCC 700927 / EHEC</strain>
    </source>
</reference>
<reference key="2">
    <citation type="journal article" date="2010" name="Nucleic Acids Res.">
        <title>Abundance of type I toxin-antitoxin systems in bacteria: searches for new candidates and discovery of novel families.</title>
        <authorList>
            <person name="Fozo E.M."/>
            <person name="Makarova K.S."/>
            <person name="Shabalina S.A."/>
            <person name="Yutin N."/>
            <person name="Koonin E.V."/>
            <person name="Storz G."/>
        </authorList>
    </citation>
    <scope>IDENTIFICATION</scope>
    <scope>FUNCTION AS A TOXIN</scope>
    <scope>INDUCTION</scope>
    <source>
        <strain>O157:H7 / EDL933 / ATCC 700927 / EHEC</strain>
    </source>
</reference>
<reference key="3">
    <citation type="journal article" date="2014" name="Nucleic Acids Res.">
        <title>The ZorO-OrzO type I toxin-antitoxin locus: repression by the OrzO antitoxin.</title>
        <authorList>
            <person name="Wen J."/>
            <person name="Won D."/>
            <person name="Fozo E.M."/>
        </authorList>
    </citation>
    <scope>FUNCTION AS A TOXIN</scope>
    <source>
        <strain>O157:H7 / EDL933 / ATCC 700927 / EHEC</strain>
    </source>
</reference>
<reference key="4">
    <citation type="journal article" date="2017" name="Nucleic Acids Res.">
        <title>The 5' UTR of the type I toxin ZorO can both inhibit and enhance translation.</title>
        <authorList>
            <person name="Wen J."/>
            <person name="Harp J.R."/>
            <person name="Fozo E.M."/>
        </authorList>
    </citation>
    <scope>FUNCTION AS A TOXIN</scope>
    <scope>INDUCTION</scope>
    <source>
        <strain>O157:H7 / EDL933 / ATCC 700927 / EHEC</strain>
    </source>
</reference>
<reference key="5">
    <citation type="journal article" date="2019" name="Toxins">
        <title>A Short Peptide Derived from the ZorO Toxin Functions as an Effective Antimicrobial.</title>
        <authorList>
            <person name="Otsuka Y."/>
            <person name="Ishikawa T."/>
            <person name="Takahashi C."/>
            <person name="Masuda M."/>
        </authorList>
    </citation>
    <scope>FUNCTION AS A TOXIN</scope>
    <scope>CAUSES MEMBRANE DAMAGE</scope>
    <scope>SUBCELLULAR LOCATION</scope>
    <scope>BIOTECHNOLOGY</scope>
    <scope>MUTAGENESIS OF 2-ASP--VAL-14; 2-ASP--THR-9; 20-ALA--LYS-29; 20-ALA--LEU-24 AND 25-ILE--LYS-29</scope>
    <source>
        <strain>O157:H7 / ATCC 43888 / CDC B6914-MS1</strain>
    </source>
</reference>
<gene>
    <name evidence="6" type="primary">zorO</name>
    <name type="ordered locus">Z3289</name>
</gene>
<name>ZORO_ECO57</name>
<sequence>MDTLTQKLTVLIAVLELLVALLRLIDLLK</sequence>
<keyword id="KW-0997">Cell inner membrane</keyword>
<keyword id="KW-1003">Cell membrane</keyword>
<keyword id="KW-0472">Membrane</keyword>
<keyword id="KW-1277">Toxin-antitoxin system</keyword>
<keyword id="KW-0812">Transmembrane</keyword>
<keyword id="KW-1133">Transmembrane helix</keyword>
<comment type="function">
    <text evidence="2 3 4 5">Toxic component of a type I toxin-antitoxin (TA) system (PubMed:20156992, PubMed:24203704, PubMed:27903909, PubMed:31277504). Expression in the absence of its cognate antitoxin (small sRNA orzO) leads to cell stasis and a decrease in colony-forming units (PubMed:24203704, PubMed:27903909). Repression of ZorO toxicity requires base pairing between zorO mRNA and sRNA OrzO, as well as RNase III (rnc), suggesting the mRNA is degraded. Base pairing occurs between 18 bases in the 5' UTR of zorO mRNA and the 5' end of OrzO sRNA. sRNA OrzP, which differs only in 4 of these 18 bases, does not repress ZorO toxicity (PubMed:24203704). Integration of the protein into the inner membrane damages membrane integrity and affects membrane potential. It leads to increased levels of hydroxyl radicals (PubMed:31277504).</text>
</comment>
<comment type="subcellular location">
    <subcellularLocation>
        <location evidence="5">Cell inner membrane</location>
        <topology evidence="1">Single-pass membrane protein</topology>
    </subcellularLocation>
</comment>
<comment type="induction">
    <text evidence="2 4">Expressed during exponential growth in rich medium and at lower levels in exponential and stationary phase in minimal medium (zorO mRNA cannot be distinguished from zorP mRNA by these assays as they are practically identical) (PubMed:20156992). Translation of this mRNA is repressed by secondary structures in its 5' UTR and partially by OrzO sRNA. Processing of the 5' UTR increases its translation in vitro and comparative toxicity in vivo (PubMed:27903909).</text>
</comment>
<comment type="biotechnology">
    <text evidence="5">A short internal peptide (AARL, residues 20-24) is toxic against B.subtilis, S.aureus and the yeast Candida albicans but not against E.coli, green monkey (Vero) or hamster cells (BHK) cultured cells. It functions in various growth media and might be used as an antimicrobial peptide. The intact protein is not toxic under any tested conditions when added to growth medium.</text>
</comment>
<proteinExistence type="evidence at protein level"/>
<dbReference type="EMBL" id="AE005174">
    <property type="protein sequence ID" value="AAG57182.1"/>
    <property type="molecule type" value="Genomic_DNA"/>
</dbReference>
<dbReference type="PIR" id="B85840">
    <property type="entry name" value="B85840"/>
</dbReference>
<dbReference type="SMR" id="Q8X3T7"/>
<dbReference type="KEGG" id="ece:Z3289"/>
<dbReference type="PATRIC" id="fig|83334.175.peg.1043"/>
<dbReference type="Proteomes" id="UP000002519">
    <property type="component" value="Chromosome"/>
</dbReference>
<dbReference type="GO" id="GO:0005886">
    <property type="term" value="C:plasma membrane"/>
    <property type="evidence" value="ECO:0007669"/>
    <property type="project" value="UniProtKB-SubCell"/>
</dbReference>
<organism>
    <name type="scientific">Escherichia coli O157:H7</name>
    <dbReference type="NCBI Taxonomy" id="83334"/>
    <lineage>
        <taxon>Bacteria</taxon>
        <taxon>Pseudomonadati</taxon>
        <taxon>Pseudomonadota</taxon>
        <taxon>Gammaproteobacteria</taxon>
        <taxon>Enterobacterales</taxon>
        <taxon>Enterobacteriaceae</taxon>
        <taxon>Escherichia</taxon>
    </lineage>
</organism>
<protein>
    <recommendedName>
        <fullName evidence="6">Small toxic protein ZorO</fullName>
    </recommendedName>
</protein>
<accession>Q8X3T7</accession>
<feature type="chain" id="PRO_0000450222" description="Small toxic protein ZorO">
    <location>
        <begin position="1"/>
        <end position="29"/>
    </location>
</feature>
<feature type="transmembrane region" description="Helical" evidence="1">
    <location>
        <begin position="10"/>
        <end position="27"/>
    </location>
</feature>
<feature type="mutagenesis site" description="Wild-type toxicity." evidence="5">
    <location>
        <begin position="2"/>
        <end position="14"/>
    </location>
</feature>
<feature type="mutagenesis site" description="Wild-type toxicity." evidence="5">
    <location>
        <begin position="2"/>
        <end position="9"/>
    </location>
</feature>
<feature type="mutagenesis site" description="Not toxic." evidence="5">
    <location>
        <begin position="20"/>
        <end position="29"/>
    </location>
</feature>
<feature type="mutagenesis site" description="Not toxic." evidence="5">
    <location>
        <begin position="20"/>
        <end position="24"/>
    </location>
</feature>
<feature type="mutagenesis site" description="Wild-type toxicity." evidence="5">
    <location>
        <begin position="25"/>
        <end position="29"/>
    </location>
</feature>
<evidence type="ECO:0000255" key="1"/>
<evidence type="ECO:0000269" key="2">
    <source>
    </source>
</evidence>
<evidence type="ECO:0000269" key="3">
    <source>
    </source>
</evidence>
<evidence type="ECO:0000269" key="4">
    <source>
    </source>
</evidence>
<evidence type="ECO:0000269" key="5">
    <source>
    </source>
</evidence>
<evidence type="ECO:0000303" key="6">
    <source>
    </source>
</evidence>